<proteinExistence type="inferred from homology"/>
<comment type="function">
    <text evidence="1">Catalyzes the NAD-dependent conversion of D-erythrose 4-phosphate to 4-phosphoerythronate.</text>
</comment>
<comment type="catalytic activity">
    <reaction evidence="1">
        <text>D-erythrose 4-phosphate + NAD(+) + H2O = 4-phospho-D-erythronate + NADH + 2 H(+)</text>
        <dbReference type="Rhea" id="RHEA:12056"/>
        <dbReference type="ChEBI" id="CHEBI:15377"/>
        <dbReference type="ChEBI" id="CHEBI:15378"/>
        <dbReference type="ChEBI" id="CHEBI:16897"/>
        <dbReference type="ChEBI" id="CHEBI:57540"/>
        <dbReference type="ChEBI" id="CHEBI:57945"/>
        <dbReference type="ChEBI" id="CHEBI:58766"/>
        <dbReference type="EC" id="1.2.1.72"/>
    </reaction>
</comment>
<comment type="pathway">
    <text evidence="1">Cofactor biosynthesis; pyridoxine 5'-phosphate biosynthesis; pyridoxine 5'-phosphate from D-erythrose 4-phosphate: step 1/5.</text>
</comment>
<comment type="subunit">
    <text evidence="1">Homotetramer.</text>
</comment>
<comment type="subcellular location">
    <subcellularLocation>
        <location evidence="1">Cytoplasm</location>
    </subcellularLocation>
</comment>
<comment type="similarity">
    <text evidence="1">Belongs to the glyceraldehyde-3-phosphate dehydrogenase family. Epd subfamily.</text>
</comment>
<dbReference type="EC" id="1.2.1.72" evidence="1"/>
<dbReference type="EMBL" id="BX571862">
    <property type="protein sequence ID" value="CAE13250.1"/>
    <property type="molecule type" value="Genomic_DNA"/>
</dbReference>
<dbReference type="RefSeq" id="WP_011145318.1">
    <property type="nucleotide sequence ID" value="NC_005126.1"/>
</dbReference>
<dbReference type="SMR" id="Q7N7Z6"/>
<dbReference type="STRING" id="243265.plu0955"/>
<dbReference type="GeneID" id="48847244"/>
<dbReference type="KEGG" id="plu:plu0955"/>
<dbReference type="eggNOG" id="COG0057">
    <property type="taxonomic scope" value="Bacteria"/>
</dbReference>
<dbReference type="HOGENOM" id="CLU_030140_0_0_6"/>
<dbReference type="OrthoDB" id="9803304at2"/>
<dbReference type="UniPathway" id="UPA00244">
    <property type="reaction ID" value="UER00309"/>
</dbReference>
<dbReference type="Proteomes" id="UP000002514">
    <property type="component" value="Chromosome"/>
</dbReference>
<dbReference type="GO" id="GO:0005737">
    <property type="term" value="C:cytoplasm"/>
    <property type="evidence" value="ECO:0007669"/>
    <property type="project" value="UniProtKB-SubCell"/>
</dbReference>
<dbReference type="GO" id="GO:0048001">
    <property type="term" value="F:erythrose-4-phosphate dehydrogenase activity"/>
    <property type="evidence" value="ECO:0007669"/>
    <property type="project" value="UniProtKB-UniRule"/>
</dbReference>
<dbReference type="GO" id="GO:0051287">
    <property type="term" value="F:NAD binding"/>
    <property type="evidence" value="ECO:0007669"/>
    <property type="project" value="InterPro"/>
</dbReference>
<dbReference type="GO" id="GO:0042823">
    <property type="term" value="P:pyridoxal phosphate biosynthetic process"/>
    <property type="evidence" value="ECO:0007669"/>
    <property type="project" value="UniProtKB-UniRule"/>
</dbReference>
<dbReference type="GO" id="GO:0008615">
    <property type="term" value="P:pyridoxine biosynthetic process"/>
    <property type="evidence" value="ECO:0007669"/>
    <property type="project" value="UniProtKB-UniRule"/>
</dbReference>
<dbReference type="CDD" id="cd23937">
    <property type="entry name" value="GAPDH_C_E4PDH"/>
    <property type="match status" value="1"/>
</dbReference>
<dbReference type="CDD" id="cd17892">
    <property type="entry name" value="GAPDH_N_E4PDH"/>
    <property type="match status" value="1"/>
</dbReference>
<dbReference type="FunFam" id="3.30.360.10:FF:000007">
    <property type="entry name" value="D-erythrose-4-phosphate dehydrogenase"/>
    <property type="match status" value="1"/>
</dbReference>
<dbReference type="FunFam" id="3.40.50.720:FF:000001">
    <property type="entry name" value="Glyceraldehyde-3-phosphate dehydrogenase"/>
    <property type="match status" value="1"/>
</dbReference>
<dbReference type="Gene3D" id="3.30.360.10">
    <property type="entry name" value="Dihydrodipicolinate Reductase, domain 2"/>
    <property type="match status" value="1"/>
</dbReference>
<dbReference type="Gene3D" id="3.40.50.720">
    <property type="entry name" value="NAD(P)-binding Rossmann-like Domain"/>
    <property type="match status" value="1"/>
</dbReference>
<dbReference type="HAMAP" id="MF_01640">
    <property type="entry name" value="E4P_dehydrog"/>
    <property type="match status" value="1"/>
</dbReference>
<dbReference type="InterPro" id="IPR006422">
    <property type="entry name" value="E4P_DH_bac"/>
</dbReference>
<dbReference type="InterPro" id="IPR020831">
    <property type="entry name" value="GlycerAld/Erythrose_P_DH"/>
</dbReference>
<dbReference type="InterPro" id="IPR020830">
    <property type="entry name" value="GlycerAld_3-P_DH_AS"/>
</dbReference>
<dbReference type="InterPro" id="IPR020829">
    <property type="entry name" value="GlycerAld_3-P_DH_cat"/>
</dbReference>
<dbReference type="InterPro" id="IPR020828">
    <property type="entry name" value="GlycerAld_3-P_DH_NAD(P)-bd"/>
</dbReference>
<dbReference type="InterPro" id="IPR036291">
    <property type="entry name" value="NAD(P)-bd_dom_sf"/>
</dbReference>
<dbReference type="NCBIfam" id="TIGR01532">
    <property type="entry name" value="E4PD_g-proteo"/>
    <property type="match status" value="1"/>
</dbReference>
<dbReference type="NCBIfam" id="NF010058">
    <property type="entry name" value="PRK13535.1"/>
    <property type="match status" value="1"/>
</dbReference>
<dbReference type="PANTHER" id="PTHR43148">
    <property type="entry name" value="GLYCERALDEHYDE-3-PHOSPHATE DEHYDROGENASE 2"/>
    <property type="match status" value="1"/>
</dbReference>
<dbReference type="Pfam" id="PF02800">
    <property type="entry name" value="Gp_dh_C"/>
    <property type="match status" value="1"/>
</dbReference>
<dbReference type="Pfam" id="PF00044">
    <property type="entry name" value="Gp_dh_N"/>
    <property type="match status" value="1"/>
</dbReference>
<dbReference type="PIRSF" id="PIRSF000149">
    <property type="entry name" value="GAP_DH"/>
    <property type="match status" value="1"/>
</dbReference>
<dbReference type="PRINTS" id="PR00078">
    <property type="entry name" value="G3PDHDRGNASE"/>
</dbReference>
<dbReference type="SMART" id="SM00846">
    <property type="entry name" value="Gp_dh_N"/>
    <property type="match status" value="1"/>
</dbReference>
<dbReference type="SUPFAM" id="SSF55347">
    <property type="entry name" value="Glyceraldehyde-3-phosphate dehydrogenase-like, C-terminal domain"/>
    <property type="match status" value="1"/>
</dbReference>
<dbReference type="SUPFAM" id="SSF51735">
    <property type="entry name" value="NAD(P)-binding Rossmann-fold domains"/>
    <property type="match status" value="1"/>
</dbReference>
<dbReference type="PROSITE" id="PS00071">
    <property type="entry name" value="GAPDH"/>
    <property type="match status" value="1"/>
</dbReference>
<sequence>MTIKVAINGFGRIGRSILRALYESGRRAEIAVIAVNELADAEGIAHLLKYDSSHGRFAWDVRLNNDVLQVGDDNIRLFHQSDISMLPWQELGIDIVLDCSGIYGSRADGEAHLASGAKKVLFAHPGGNDLDATVVYGVNQHLLTAEDRIVSNASCTTNCIIPIIKLLDDQFEIESGTVTTIHASMNDQPVIDAYHKDLRRTRAASQSIIPVDTKLAAGITRIFPKFCDRFEAISVRVPTINVTAIDLSVTVKSSVTVNKINELMQKSAATSFRGIVDYTELPLVSTDFNHDPHSAIVDGTQTRVSGQHLIKTLVWCDNEWGFANRMLDTTLAMAAMGFK</sequence>
<reference key="1">
    <citation type="journal article" date="2003" name="Nat. Biotechnol.">
        <title>The genome sequence of the entomopathogenic bacterium Photorhabdus luminescens.</title>
        <authorList>
            <person name="Duchaud E."/>
            <person name="Rusniok C."/>
            <person name="Frangeul L."/>
            <person name="Buchrieser C."/>
            <person name="Givaudan A."/>
            <person name="Taourit S."/>
            <person name="Bocs S."/>
            <person name="Boursaux-Eude C."/>
            <person name="Chandler M."/>
            <person name="Charles J.-F."/>
            <person name="Dassa E."/>
            <person name="Derose R."/>
            <person name="Derzelle S."/>
            <person name="Freyssinet G."/>
            <person name="Gaudriault S."/>
            <person name="Medigue C."/>
            <person name="Lanois A."/>
            <person name="Powell K."/>
            <person name="Siguier P."/>
            <person name="Vincent R."/>
            <person name="Wingate V."/>
            <person name="Zouine M."/>
            <person name="Glaser P."/>
            <person name="Boemare N."/>
            <person name="Danchin A."/>
            <person name="Kunst F."/>
        </authorList>
    </citation>
    <scope>NUCLEOTIDE SEQUENCE [LARGE SCALE GENOMIC DNA]</scope>
    <source>
        <strain>DSM 15139 / CIP 105565 / TT01</strain>
    </source>
</reference>
<gene>
    <name evidence="1" type="primary">epd</name>
    <name type="ordered locus">plu0955</name>
</gene>
<accession>Q7N7Z6</accession>
<name>E4PD_PHOLL</name>
<feature type="chain" id="PRO_0000293151" description="D-erythrose-4-phosphate dehydrogenase">
    <location>
        <begin position="1"/>
        <end position="339"/>
    </location>
</feature>
<feature type="active site" description="Nucleophile" evidence="1">
    <location>
        <position position="155"/>
    </location>
</feature>
<feature type="binding site" evidence="1">
    <location>
        <begin position="12"/>
        <end position="13"/>
    </location>
    <ligand>
        <name>NAD(+)</name>
        <dbReference type="ChEBI" id="CHEBI:57540"/>
    </ligand>
</feature>
<feature type="binding site" evidence="1">
    <location>
        <begin position="154"/>
        <end position="156"/>
    </location>
    <ligand>
        <name>substrate</name>
    </ligand>
</feature>
<feature type="binding site" evidence="1">
    <location>
        <position position="200"/>
    </location>
    <ligand>
        <name>substrate</name>
    </ligand>
</feature>
<feature type="binding site" evidence="1">
    <location>
        <begin position="213"/>
        <end position="214"/>
    </location>
    <ligand>
        <name>substrate</name>
    </ligand>
</feature>
<feature type="binding site" evidence="1">
    <location>
        <position position="236"/>
    </location>
    <ligand>
        <name>substrate</name>
    </ligand>
</feature>
<feature type="binding site" evidence="1">
    <location>
        <position position="318"/>
    </location>
    <ligand>
        <name>NAD(+)</name>
        <dbReference type="ChEBI" id="CHEBI:57540"/>
    </ligand>
</feature>
<feature type="site" description="Activates thiol group during catalysis" evidence="1">
    <location>
        <position position="182"/>
    </location>
</feature>
<protein>
    <recommendedName>
        <fullName evidence="1">D-erythrose-4-phosphate dehydrogenase</fullName>
        <shortName evidence="1">E4PDH</shortName>
        <ecNumber evidence="1">1.2.1.72</ecNumber>
    </recommendedName>
</protein>
<organism>
    <name type="scientific">Photorhabdus laumondii subsp. laumondii (strain DSM 15139 / CIP 105565 / TT01)</name>
    <name type="common">Photorhabdus luminescens subsp. laumondii</name>
    <dbReference type="NCBI Taxonomy" id="243265"/>
    <lineage>
        <taxon>Bacteria</taxon>
        <taxon>Pseudomonadati</taxon>
        <taxon>Pseudomonadota</taxon>
        <taxon>Gammaproteobacteria</taxon>
        <taxon>Enterobacterales</taxon>
        <taxon>Morganellaceae</taxon>
        <taxon>Photorhabdus</taxon>
    </lineage>
</organism>
<evidence type="ECO:0000255" key="1">
    <source>
        <dbReference type="HAMAP-Rule" id="MF_01640"/>
    </source>
</evidence>
<keyword id="KW-0963">Cytoplasm</keyword>
<keyword id="KW-0520">NAD</keyword>
<keyword id="KW-0560">Oxidoreductase</keyword>
<keyword id="KW-0664">Pyridoxine biosynthesis</keyword>
<keyword id="KW-1185">Reference proteome</keyword>